<evidence type="ECO:0000255" key="1">
    <source>
        <dbReference type="HAMAP-Rule" id="MF_01183"/>
    </source>
</evidence>
<evidence type="ECO:0000256" key="2">
    <source>
        <dbReference type="SAM" id="MobiDB-lite"/>
    </source>
</evidence>
<gene>
    <name evidence="1" type="primary">surA</name>
    <name type="ordered locus">MCA0602</name>
</gene>
<feature type="signal peptide" evidence="1">
    <location>
        <begin position="1"/>
        <end position="28"/>
    </location>
</feature>
<feature type="chain" id="PRO_0000270021" description="Chaperone SurA">
    <location>
        <begin position="29"/>
        <end position="454"/>
    </location>
</feature>
<feature type="domain" description="PpiC 1" evidence="1">
    <location>
        <begin position="177"/>
        <end position="278"/>
    </location>
</feature>
<feature type="domain" description="PpiC 2" evidence="1">
    <location>
        <begin position="287"/>
        <end position="386"/>
    </location>
</feature>
<feature type="region of interest" description="Disordered" evidence="2">
    <location>
        <begin position="431"/>
        <end position="454"/>
    </location>
</feature>
<feature type="compositionally biased region" description="Acidic residues" evidence="2">
    <location>
        <begin position="443"/>
        <end position="454"/>
    </location>
</feature>
<dbReference type="EC" id="5.2.1.8" evidence="1"/>
<dbReference type="EMBL" id="AE017282">
    <property type="protein sequence ID" value="AAU93127.1"/>
    <property type="molecule type" value="Genomic_DNA"/>
</dbReference>
<dbReference type="RefSeq" id="WP_010959947.1">
    <property type="nucleotide sequence ID" value="NC_002977.6"/>
</dbReference>
<dbReference type="SMR" id="Q60B78"/>
<dbReference type="STRING" id="243233.MCA0602"/>
<dbReference type="GeneID" id="88222933"/>
<dbReference type="KEGG" id="mca:MCA0602"/>
<dbReference type="eggNOG" id="COG0760">
    <property type="taxonomic scope" value="Bacteria"/>
</dbReference>
<dbReference type="HOGENOM" id="CLU_034646_11_0_6"/>
<dbReference type="Proteomes" id="UP000006821">
    <property type="component" value="Chromosome"/>
</dbReference>
<dbReference type="GO" id="GO:0030288">
    <property type="term" value="C:outer membrane-bounded periplasmic space"/>
    <property type="evidence" value="ECO:0007669"/>
    <property type="project" value="InterPro"/>
</dbReference>
<dbReference type="GO" id="GO:0042277">
    <property type="term" value="F:peptide binding"/>
    <property type="evidence" value="ECO:0007669"/>
    <property type="project" value="InterPro"/>
</dbReference>
<dbReference type="GO" id="GO:0003755">
    <property type="term" value="F:peptidyl-prolyl cis-trans isomerase activity"/>
    <property type="evidence" value="ECO:0007669"/>
    <property type="project" value="UniProtKB-UniRule"/>
</dbReference>
<dbReference type="GO" id="GO:0051082">
    <property type="term" value="F:unfolded protein binding"/>
    <property type="evidence" value="ECO:0007669"/>
    <property type="project" value="UniProtKB-UniRule"/>
</dbReference>
<dbReference type="GO" id="GO:0043165">
    <property type="term" value="P:Gram-negative-bacterium-type cell outer membrane assembly"/>
    <property type="evidence" value="ECO:0007669"/>
    <property type="project" value="InterPro"/>
</dbReference>
<dbReference type="GO" id="GO:0006457">
    <property type="term" value="P:protein folding"/>
    <property type="evidence" value="ECO:0007669"/>
    <property type="project" value="UniProtKB-UniRule"/>
</dbReference>
<dbReference type="GO" id="GO:0050821">
    <property type="term" value="P:protein stabilization"/>
    <property type="evidence" value="ECO:0007669"/>
    <property type="project" value="InterPro"/>
</dbReference>
<dbReference type="Gene3D" id="3.10.50.40">
    <property type="match status" value="2"/>
</dbReference>
<dbReference type="Gene3D" id="1.10.4030.10">
    <property type="entry name" value="Porin chaperone SurA, peptide-binding domain"/>
    <property type="match status" value="1"/>
</dbReference>
<dbReference type="HAMAP" id="MF_01183">
    <property type="entry name" value="Chaperone_SurA"/>
    <property type="match status" value="1"/>
</dbReference>
<dbReference type="InterPro" id="IPR050280">
    <property type="entry name" value="OMP_Chaperone_SurA"/>
</dbReference>
<dbReference type="InterPro" id="IPR046357">
    <property type="entry name" value="PPIase_dom_sf"/>
</dbReference>
<dbReference type="InterPro" id="IPR000297">
    <property type="entry name" value="PPIase_PpiC"/>
</dbReference>
<dbReference type="InterPro" id="IPR023058">
    <property type="entry name" value="PPIase_PpiC_CS"/>
</dbReference>
<dbReference type="InterPro" id="IPR023034">
    <property type="entry name" value="PPIase_SurA"/>
</dbReference>
<dbReference type="InterPro" id="IPR015391">
    <property type="entry name" value="SurA_N"/>
</dbReference>
<dbReference type="InterPro" id="IPR027304">
    <property type="entry name" value="Trigger_fact/SurA_dom_sf"/>
</dbReference>
<dbReference type="PANTHER" id="PTHR47637">
    <property type="entry name" value="CHAPERONE SURA"/>
    <property type="match status" value="1"/>
</dbReference>
<dbReference type="PANTHER" id="PTHR47637:SF1">
    <property type="entry name" value="CHAPERONE SURA"/>
    <property type="match status" value="1"/>
</dbReference>
<dbReference type="Pfam" id="PF00639">
    <property type="entry name" value="Rotamase"/>
    <property type="match status" value="1"/>
</dbReference>
<dbReference type="Pfam" id="PF13616">
    <property type="entry name" value="Rotamase_3"/>
    <property type="match status" value="1"/>
</dbReference>
<dbReference type="Pfam" id="PF09312">
    <property type="entry name" value="SurA_N"/>
    <property type="match status" value="1"/>
</dbReference>
<dbReference type="SUPFAM" id="SSF54534">
    <property type="entry name" value="FKBP-like"/>
    <property type="match status" value="2"/>
</dbReference>
<dbReference type="SUPFAM" id="SSF109998">
    <property type="entry name" value="Triger factor/SurA peptide-binding domain-like"/>
    <property type="match status" value="1"/>
</dbReference>
<dbReference type="PROSITE" id="PS01096">
    <property type="entry name" value="PPIC_PPIASE_1"/>
    <property type="match status" value="1"/>
</dbReference>
<dbReference type="PROSITE" id="PS50198">
    <property type="entry name" value="PPIC_PPIASE_2"/>
    <property type="match status" value="2"/>
</dbReference>
<comment type="function">
    <text evidence="1">Chaperone involved in the correct folding and assembly of outer membrane proteins. Recognizes specific patterns of aromatic residues and the orientation of their side chains, which are found more frequently in integral outer membrane proteins. May act in both early periplasmic and late outer membrane-associated steps of protein maturation.</text>
</comment>
<comment type="catalytic activity">
    <reaction evidence="1">
        <text>[protein]-peptidylproline (omega=180) = [protein]-peptidylproline (omega=0)</text>
        <dbReference type="Rhea" id="RHEA:16237"/>
        <dbReference type="Rhea" id="RHEA-COMP:10747"/>
        <dbReference type="Rhea" id="RHEA-COMP:10748"/>
        <dbReference type="ChEBI" id="CHEBI:83833"/>
        <dbReference type="ChEBI" id="CHEBI:83834"/>
        <dbReference type="EC" id="5.2.1.8"/>
    </reaction>
</comment>
<comment type="subcellular location">
    <subcellularLocation>
        <location evidence="1">Periplasm</location>
    </subcellularLocation>
    <text evidence="1">Is capable of associating with the outer membrane.</text>
</comment>
<comment type="domain">
    <text evidence="1">The PPIase activity resides only in the second parvulin domain. The N-terminal region and the C-terminal tail are necessary and sufficient for the chaperone activity of SurA. The PPIase activity is dispensable for SurA to function as a chaperone. The N-terminal region and the C-terminal tail are also required for porin recognition.</text>
</comment>
<sequence length="454" mass="50789">MKISSFRKGRWLGALALFAVVCWSMADAAVDRIVAVVDDGVILESELVRKVDEIKRSLRASRASLPPDSVLVRQVLERMIVDKIQIQMAEKMGIQVDDDTLRMAVSQIAQRNNLTPDQFRRSLAREGIDYGDFLDQVRSEIAMGRLRASQINNQIKISDREVEHYLEAQGGSGAVADREYRLGHILIATPREASPDEVKKARERADRVVKELKAGLDFKDASIRYSDDPQALEGGDLGWRKLSEIPSHIAEVVGGMKDGEVSDPIRSPGGYHIVKMLAMRGVGEAKLTKTHVRHILIRPNEVLSDEDAKNKLLALKTRIENGDDFAELARGHSDDKGSAIKGGDLGWVKPGALVPPFEEAMNALDENQLSDPVQTQFGWHLIQVLERQESSDTNEVLKNRARDELFKRKVDEETELWLRKIRDEAYVEIRLDETPASPGEDAPAGEDSPETFMR</sequence>
<accession>Q60B78</accession>
<keyword id="KW-0143">Chaperone</keyword>
<keyword id="KW-0413">Isomerase</keyword>
<keyword id="KW-0574">Periplasm</keyword>
<keyword id="KW-1185">Reference proteome</keyword>
<keyword id="KW-0677">Repeat</keyword>
<keyword id="KW-0697">Rotamase</keyword>
<keyword id="KW-0732">Signal</keyword>
<reference key="1">
    <citation type="journal article" date="2004" name="PLoS Biol.">
        <title>Genomic insights into methanotrophy: the complete genome sequence of Methylococcus capsulatus (Bath).</title>
        <authorList>
            <person name="Ward N.L."/>
            <person name="Larsen O."/>
            <person name="Sakwa J."/>
            <person name="Bruseth L."/>
            <person name="Khouri H.M."/>
            <person name="Durkin A.S."/>
            <person name="Dimitrov G."/>
            <person name="Jiang L."/>
            <person name="Scanlan D."/>
            <person name="Kang K.H."/>
            <person name="Lewis M.R."/>
            <person name="Nelson K.E."/>
            <person name="Methe B.A."/>
            <person name="Wu M."/>
            <person name="Heidelberg J.F."/>
            <person name="Paulsen I.T."/>
            <person name="Fouts D.E."/>
            <person name="Ravel J."/>
            <person name="Tettelin H."/>
            <person name="Ren Q."/>
            <person name="Read T.D."/>
            <person name="DeBoy R.T."/>
            <person name="Seshadri R."/>
            <person name="Salzberg S.L."/>
            <person name="Jensen H.B."/>
            <person name="Birkeland N.K."/>
            <person name="Nelson W.C."/>
            <person name="Dodson R.J."/>
            <person name="Grindhaug S.H."/>
            <person name="Holt I.E."/>
            <person name="Eidhammer I."/>
            <person name="Jonasen I."/>
            <person name="Vanaken S."/>
            <person name="Utterback T.R."/>
            <person name="Feldblyum T.V."/>
            <person name="Fraser C.M."/>
            <person name="Lillehaug J.R."/>
            <person name="Eisen J.A."/>
        </authorList>
    </citation>
    <scope>NUCLEOTIDE SEQUENCE [LARGE SCALE GENOMIC DNA]</scope>
    <source>
        <strain>ATCC 33009 / NCIMB 11132 / Bath</strain>
    </source>
</reference>
<name>SURA_METCA</name>
<organism>
    <name type="scientific">Methylococcus capsulatus (strain ATCC 33009 / NCIMB 11132 / Bath)</name>
    <dbReference type="NCBI Taxonomy" id="243233"/>
    <lineage>
        <taxon>Bacteria</taxon>
        <taxon>Pseudomonadati</taxon>
        <taxon>Pseudomonadota</taxon>
        <taxon>Gammaproteobacteria</taxon>
        <taxon>Methylococcales</taxon>
        <taxon>Methylococcaceae</taxon>
        <taxon>Methylococcus</taxon>
    </lineage>
</organism>
<proteinExistence type="inferred from homology"/>
<protein>
    <recommendedName>
        <fullName evidence="1">Chaperone SurA</fullName>
    </recommendedName>
    <alternativeName>
        <fullName evidence="1">Peptidyl-prolyl cis-trans isomerase SurA</fullName>
        <shortName evidence="1">PPIase SurA</shortName>
        <ecNumber evidence="1">5.2.1.8</ecNumber>
    </alternativeName>
    <alternativeName>
        <fullName evidence="1">Rotamase SurA</fullName>
    </alternativeName>
</protein>